<comment type="function">
    <text evidence="1">Required for dimerization of active 70S ribosomes into 100S ribosomes in stationary phase; 100S ribosomes are translationally inactive and sometimes present during exponential growth.</text>
</comment>
<comment type="subunit">
    <text evidence="1">Interacts with 100S ribosomes.</text>
</comment>
<comment type="subcellular location">
    <subcellularLocation>
        <location evidence="1">Cytoplasm</location>
    </subcellularLocation>
</comment>
<comment type="similarity">
    <text evidence="1">Belongs to the HPF/YfiA ribosome-associated protein family. Long HPF subfamily.</text>
</comment>
<proteinExistence type="inferred from homology"/>
<gene>
    <name evidence="1" type="primary">hpf</name>
    <name type="ordered locus">R00380</name>
    <name type="ORF">SMc01140</name>
</gene>
<protein>
    <recommendedName>
        <fullName evidence="1">Ribosome hibernation promotion factor</fullName>
        <shortName evidence="1">HPF</shortName>
    </recommendedName>
</protein>
<keyword id="KW-0963">Cytoplasm</keyword>
<keyword id="KW-1185">Reference proteome</keyword>
<keyword id="KW-0810">Translation regulation</keyword>
<feature type="chain" id="PRO_0000097425" description="Ribosome hibernation promotion factor">
    <location>
        <begin position="1"/>
        <end position="190"/>
    </location>
</feature>
<accession>P17265</accession>
<evidence type="ECO:0000255" key="1">
    <source>
        <dbReference type="HAMAP-Rule" id="MF_00839"/>
    </source>
</evidence>
<organism>
    <name type="scientific">Rhizobium meliloti (strain 1021)</name>
    <name type="common">Ensifer meliloti</name>
    <name type="synonym">Sinorhizobium meliloti</name>
    <dbReference type="NCBI Taxonomy" id="266834"/>
    <lineage>
        <taxon>Bacteria</taxon>
        <taxon>Pseudomonadati</taxon>
        <taxon>Pseudomonadota</taxon>
        <taxon>Alphaproteobacteria</taxon>
        <taxon>Hyphomicrobiales</taxon>
        <taxon>Rhizobiaceae</taxon>
        <taxon>Sinorhizobium/Ensifer group</taxon>
        <taxon>Sinorhizobium</taxon>
    </lineage>
</organism>
<reference key="1">
    <citation type="journal article" date="2001" name="Proc. Natl. Acad. Sci. U.S.A.">
        <title>Analysis of the chromosome sequence of the legume symbiont Sinorhizobium meliloti strain 1021.</title>
        <authorList>
            <person name="Capela D."/>
            <person name="Barloy-Hubler F."/>
            <person name="Gouzy J."/>
            <person name="Bothe G."/>
            <person name="Ampe F."/>
            <person name="Batut J."/>
            <person name="Boistard P."/>
            <person name="Becker A."/>
            <person name="Boutry M."/>
            <person name="Cadieu E."/>
            <person name="Dreano S."/>
            <person name="Gloux S."/>
            <person name="Godrie T."/>
            <person name="Goffeau A."/>
            <person name="Kahn D."/>
            <person name="Kiss E."/>
            <person name="Lelaure V."/>
            <person name="Masuy D."/>
            <person name="Pohl T."/>
            <person name="Portetelle D."/>
            <person name="Puehler A."/>
            <person name="Purnelle B."/>
            <person name="Ramsperger U."/>
            <person name="Renard C."/>
            <person name="Thebault P."/>
            <person name="Vandenbol M."/>
            <person name="Weidner S."/>
            <person name="Galibert F."/>
        </authorList>
    </citation>
    <scope>NUCLEOTIDE SEQUENCE [LARGE SCALE GENOMIC DNA]</scope>
    <source>
        <strain>1021</strain>
    </source>
</reference>
<reference key="2">
    <citation type="journal article" date="2001" name="Science">
        <title>The composite genome of the legume symbiont Sinorhizobium meliloti.</title>
        <authorList>
            <person name="Galibert F."/>
            <person name="Finan T.M."/>
            <person name="Long S.R."/>
            <person name="Puehler A."/>
            <person name="Abola P."/>
            <person name="Ampe F."/>
            <person name="Barloy-Hubler F."/>
            <person name="Barnett M.J."/>
            <person name="Becker A."/>
            <person name="Boistard P."/>
            <person name="Bothe G."/>
            <person name="Boutry M."/>
            <person name="Bowser L."/>
            <person name="Buhrmester J."/>
            <person name="Cadieu E."/>
            <person name="Capela D."/>
            <person name="Chain P."/>
            <person name="Cowie A."/>
            <person name="Davis R.W."/>
            <person name="Dreano S."/>
            <person name="Federspiel N.A."/>
            <person name="Fisher R.F."/>
            <person name="Gloux S."/>
            <person name="Godrie T."/>
            <person name="Goffeau A."/>
            <person name="Golding B."/>
            <person name="Gouzy J."/>
            <person name="Gurjal M."/>
            <person name="Hernandez-Lucas I."/>
            <person name="Hong A."/>
            <person name="Huizar L."/>
            <person name="Hyman R.W."/>
            <person name="Jones T."/>
            <person name="Kahn D."/>
            <person name="Kahn M.L."/>
            <person name="Kalman S."/>
            <person name="Keating D.H."/>
            <person name="Kiss E."/>
            <person name="Komp C."/>
            <person name="Lelaure V."/>
            <person name="Masuy D."/>
            <person name="Palm C."/>
            <person name="Peck M.C."/>
            <person name="Pohl T.M."/>
            <person name="Portetelle D."/>
            <person name="Purnelle B."/>
            <person name="Ramsperger U."/>
            <person name="Surzycki R."/>
            <person name="Thebault P."/>
            <person name="Vandenbol M."/>
            <person name="Vorhoelter F.J."/>
            <person name="Weidner S."/>
            <person name="Wells D.H."/>
            <person name="Wong K."/>
            <person name="Yeh K.-C."/>
            <person name="Batut J."/>
        </authorList>
    </citation>
    <scope>NUCLEOTIDE SEQUENCE [LARGE SCALE GENOMIC DNA]</scope>
    <source>
        <strain>1021</strain>
    </source>
</reference>
<reference key="3">
    <citation type="journal article" date="1987" name="J. Bacteriol.">
        <title>Rhizobium meliloti ntrA (rpoN) gene is required for diverse metabolic functions.</title>
        <authorList>
            <person name="Ronson C.W."/>
            <person name="Nixon B.T."/>
            <person name="Albright L.M."/>
            <person name="Ausubel F.M."/>
        </authorList>
    </citation>
    <scope>NUCLEOTIDE SEQUENCE [GENOMIC DNA] OF 1-105</scope>
</reference>
<dbReference type="EMBL" id="AL591688">
    <property type="protein sequence ID" value="CAC41817.1"/>
    <property type="molecule type" value="Genomic_DNA"/>
</dbReference>
<dbReference type="EMBL" id="M16513">
    <property type="protein sequence ID" value="AAD15118.1"/>
    <property type="molecule type" value="Genomic_DNA"/>
</dbReference>
<dbReference type="RefSeq" id="NP_384486.1">
    <property type="nucleotide sequence ID" value="NC_003047.1"/>
</dbReference>
<dbReference type="RefSeq" id="WP_003527725.1">
    <property type="nucleotide sequence ID" value="NC_003047.1"/>
</dbReference>
<dbReference type="SMR" id="P17265"/>
<dbReference type="EnsemblBacteria" id="CAC41817">
    <property type="protein sequence ID" value="CAC41817"/>
    <property type="gene ID" value="SMc01140"/>
</dbReference>
<dbReference type="KEGG" id="sme:SMc01140"/>
<dbReference type="PATRIC" id="fig|266834.11.peg.1752"/>
<dbReference type="eggNOG" id="COG1544">
    <property type="taxonomic scope" value="Bacteria"/>
</dbReference>
<dbReference type="HOGENOM" id="CLU_071472_0_1_5"/>
<dbReference type="OrthoDB" id="9794975at2"/>
<dbReference type="Proteomes" id="UP000001976">
    <property type="component" value="Chromosome"/>
</dbReference>
<dbReference type="GO" id="GO:0022627">
    <property type="term" value="C:cytosolic small ribosomal subunit"/>
    <property type="evidence" value="ECO:0007669"/>
    <property type="project" value="TreeGrafter"/>
</dbReference>
<dbReference type="GO" id="GO:0043024">
    <property type="term" value="F:ribosomal small subunit binding"/>
    <property type="evidence" value="ECO:0007669"/>
    <property type="project" value="TreeGrafter"/>
</dbReference>
<dbReference type="GO" id="GO:0045900">
    <property type="term" value="P:negative regulation of translational elongation"/>
    <property type="evidence" value="ECO:0007669"/>
    <property type="project" value="TreeGrafter"/>
</dbReference>
<dbReference type="CDD" id="cd00552">
    <property type="entry name" value="RaiA"/>
    <property type="match status" value="1"/>
</dbReference>
<dbReference type="Gene3D" id="3.30.160.100">
    <property type="entry name" value="Ribosome hibernation promotion factor-like"/>
    <property type="match status" value="1"/>
</dbReference>
<dbReference type="Gene3D" id="3.30.505.50">
    <property type="entry name" value="Sigma 54 modulation/S30EA ribosomal protein, C-terminal domain"/>
    <property type="match status" value="1"/>
</dbReference>
<dbReference type="HAMAP" id="MF_00839">
    <property type="entry name" value="HPF"/>
    <property type="match status" value="1"/>
</dbReference>
<dbReference type="InterPro" id="IPR050574">
    <property type="entry name" value="HPF/YfiA_ribosome-assoc"/>
</dbReference>
<dbReference type="InterPro" id="IPR034694">
    <property type="entry name" value="HPF_long/plastid"/>
</dbReference>
<dbReference type="InterPro" id="IPR036567">
    <property type="entry name" value="RHF-like"/>
</dbReference>
<dbReference type="InterPro" id="IPR003489">
    <property type="entry name" value="RHF/RaiA"/>
</dbReference>
<dbReference type="InterPro" id="IPR032528">
    <property type="entry name" value="Ribosom_S30AE_C"/>
</dbReference>
<dbReference type="InterPro" id="IPR038416">
    <property type="entry name" value="Ribosom_S30AE_C_sf"/>
</dbReference>
<dbReference type="NCBIfam" id="TIGR00741">
    <property type="entry name" value="yfiA"/>
    <property type="match status" value="1"/>
</dbReference>
<dbReference type="PANTHER" id="PTHR33231">
    <property type="entry name" value="30S RIBOSOMAL PROTEIN"/>
    <property type="match status" value="1"/>
</dbReference>
<dbReference type="PANTHER" id="PTHR33231:SF1">
    <property type="entry name" value="30S RIBOSOMAL PROTEIN"/>
    <property type="match status" value="1"/>
</dbReference>
<dbReference type="Pfam" id="PF16321">
    <property type="entry name" value="Ribosom_S30AE_C"/>
    <property type="match status" value="1"/>
</dbReference>
<dbReference type="Pfam" id="PF02482">
    <property type="entry name" value="Ribosomal_S30AE"/>
    <property type="match status" value="1"/>
</dbReference>
<dbReference type="SUPFAM" id="SSF69754">
    <property type="entry name" value="Ribosome binding protein Y (YfiA homologue)"/>
    <property type="match status" value="1"/>
</dbReference>
<sequence>MSVRVSGKHMEIGDSFRVRIGEQIEQAVTKYFDGGYSSQVTVEKSGSRFSADCKLHLDTGVVLQANGQANEPQSAFDAASERIEKRLRRYKRKLKDHHNGNGQNSTEVAYRVMDSVPFEDEEVPDDYAPTIVAETTKQLRTMSVANAVMALDMTDEPVLMFRSPGKDDLNIVYRRNDGNIGWIDAANIKA</sequence>
<name>HPF_RHIME</name>